<sequence length="283" mass="31435">MHFFSPAKLNIFLQLLGKREDGFHEIVTRYQAVSFGDQLSLSVSSRDSFQIINDCQLEISNNSIWKSTALFRQYTGITDPVSWRVVKHIPIGSGLAGGSSNAATALFALNQMFQTGLSDEELRSLAEKVGMDTPFFFSSGSALGLGRGEKVVTLNELVVDRYILYFSNKGVLTSEAFAVVKPSDCSLSKDLEYARNDLENPVFRLRLDLKEKKRWLEDLWKGIPVYVGLTGSGATLFVRYPKALEKNSAYATQIQKIIALSGGVSTSPIQRDTPNWYPTILEA</sequence>
<comment type="function">
    <text evidence="1">Catalyzes the phosphorylation of the position 2 hydroxy group of 4-diphosphocytidyl-2C-methyl-D-erythritol.</text>
</comment>
<comment type="catalytic activity">
    <reaction evidence="1">
        <text>4-CDP-2-C-methyl-D-erythritol + ATP = 4-CDP-2-C-methyl-D-erythritol 2-phosphate + ADP + H(+)</text>
        <dbReference type="Rhea" id="RHEA:18437"/>
        <dbReference type="ChEBI" id="CHEBI:15378"/>
        <dbReference type="ChEBI" id="CHEBI:30616"/>
        <dbReference type="ChEBI" id="CHEBI:57823"/>
        <dbReference type="ChEBI" id="CHEBI:57919"/>
        <dbReference type="ChEBI" id="CHEBI:456216"/>
        <dbReference type="EC" id="2.7.1.148"/>
    </reaction>
</comment>
<comment type="pathway">
    <text evidence="1">Isoprenoid biosynthesis; isopentenyl diphosphate biosynthesis via DXP pathway; isopentenyl diphosphate from 1-deoxy-D-xylulose 5-phosphate: step 3/6.</text>
</comment>
<comment type="similarity">
    <text evidence="1">Belongs to the GHMP kinase family. IspE subfamily.</text>
</comment>
<reference key="1">
    <citation type="journal article" date="2000" name="Nucleic Acids Res.">
        <title>Genome sequences of Chlamydia trachomatis MoPn and Chlamydia pneumoniae AR39.</title>
        <authorList>
            <person name="Read T.D."/>
            <person name="Brunham R.C."/>
            <person name="Shen C."/>
            <person name="Gill S.R."/>
            <person name="Heidelberg J.F."/>
            <person name="White O."/>
            <person name="Hickey E.K."/>
            <person name="Peterson J.D."/>
            <person name="Utterback T.R."/>
            <person name="Berry K.J."/>
            <person name="Bass S."/>
            <person name="Linher K.D."/>
            <person name="Weidman J.F."/>
            <person name="Khouri H.M."/>
            <person name="Craven B."/>
            <person name="Bowman C."/>
            <person name="Dodson R.J."/>
            <person name="Gwinn M.L."/>
            <person name="Nelson W.C."/>
            <person name="DeBoy R.T."/>
            <person name="Kolonay J.F."/>
            <person name="McClarty G."/>
            <person name="Salzberg S.L."/>
            <person name="Eisen J.A."/>
            <person name="Fraser C.M."/>
        </authorList>
    </citation>
    <scope>NUCLEOTIDE SEQUENCE [LARGE SCALE GENOMIC DNA]</scope>
    <source>
        <strain>MoPn / Nigg</strain>
    </source>
</reference>
<accession>Q9PLC0</accession>
<evidence type="ECO:0000255" key="1">
    <source>
        <dbReference type="HAMAP-Rule" id="MF_00061"/>
    </source>
</evidence>
<gene>
    <name evidence="1" type="primary">ispE</name>
    <name type="ordered locus">TC_0187</name>
</gene>
<dbReference type="EC" id="2.7.1.148" evidence="1"/>
<dbReference type="EMBL" id="AE002160">
    <property type="protein sequence ID" value="AAF39061.1"/>
    <property type="molecule type" value="Genomic_DNA"/>
</dbReference>
<dbReference type="PIR" id="G81732">
    <property type="entry name" value="G81732"/>
</dbReference>
<dbReference type="RefSeq" id="WP_010229763.1">
    <property type="nucleotide sequence ID" value="NZ_CP063055.1"/>
</dbReference>
<dbReference type="SMR" id="Q9PLC0"/>
<dbReference type="GeneID" id="1246313"/>
<dbReference type="KEGG" id="cmu:TC_0187"/>
<dbReference type="eggNOG" id="COG1947">
    <property type="taxonomic scope" value="Bacteria"/>
</dbReference>
<dbReference type="HOGENOM" id="CLU_053057_3_0_0"/>
<dbReference type="OrthoDB" id="9809438at2"/>
<dbReference type="UniPathway" id="UPA00056">
    <property type="reaction ID" value="UER00094"/>
</dbReference>
<dbReference type="Proteomes" id="UP000000800">
    <property type="component" value="Chromosome"/>
</dbReference>
<dbReference type="GO" id="GO:0050515">
    <property type="term" value="F:4-(cytidine 5'-diphospho)-2-C-methyl-D-erythritol kinase activity"/>
    <property type="evidence" value="ECO:0007669"/>
    <property type="project" value="UniProtKB-UniRule"/>
</dbReference>
<dbReference type="GO" id="GO:0005524">
    <property type="term" value="F:ATP binding"/>
    <property type="evidence" value="ECO:0007669"/>
    <property type="project" value="UniProtKB-UniRule"/>
</dbReference>
<dbReference type="GO" id="GO:0019288">
    <property type="term" value="P:isopentenyl diphosphate biosynthetic process, methylerythritol 4-phosphate pathway"/>
    <property type="evidence" value="ECO:0007669"/>
    <property type="project" value="UniProtKB-UniRule"/>
</dbReference>
<dbReference type="GO" id="GO:0016114">
    <property type="term" value="P:terpenoid biosynthetic process"/>
    <property type="evidence" value="ECO:0007669"/>
    <property type="project" value="InterPro"/>
</dbReference>
<dbReference type="Gene3D" id="3.30.230.10">
    <property type="match status" value="1"/>
</dbReference>
<dbReference type="Gene3D" id="3.30.70.890">
    <property type="entry name" value="GHMP kinase, C-terminal domain"/>
    <property type="match status" value="1"/>
</dbReference>
<dbReference type="HAMAP" id="MF_00061">
    <property type="entry name" value="IspE"/>
    <property type="match status" value="1"/>
</dbReference>
<dbReference type="InterPro" id="IPR036554">
    <property type="entry name" value="GHMP_kinase_C_sf"/>
</dbReference>
<dbReference type="InterPro" id="IPR006204">
    <property type="entry name" value="GHMP_kinase_N_dom"/>
</dbReference>
<dbReference type="InterPro" id="IPR004424">
    <property type="entry name" value="IspE"/>
</dbReference>
<dbReference type="InterPro" id="IPR020568">
    <property type="entry name" value="Ribosomal_Su5_D2-typ_SF"/>
</dbReference>
<dbReference type="InterPro" id="IPR014721">
    <property type="entry name" value="Ribsml_uS5_D2-typ_fold_subgr"/>
</dbReference>
<dbReference type="NCBIfam" id="TIGR00154">
    <property type="entry name" value="ispE"/>
    <property type="match status" value="1"/>
</dbReference>
<dbReference type="PANTHER" id="PTHR43527">
    <property type="entry name" value="4-DIPHOSPHOCYTIDYL-2-C-METHYL-D-ERYTHRITOL KINASE, CHLOROPLASTIC"/>
    <property type="match status" value="1"/>
</dbReference>
<dbReference type="PANTHER" id="PTHR43527:SF2">
    <property type="entry name" value="4-DIPHOSPHOCYTIDYL-2-C-METHYL-D-ERYTHRITOL KINASE, CHLOROPLASTIC"/>
    <property type="match status" value="1"/>
</dbReference>
<dbReference type="Pfam" id="PF00288">
    <property type="entry name" value="GHMP_kinases_N"/>
    <property type="match status" value="1"/>
</dbReference>
<dbReference type="PIRSF" id="PIRSF010376">
    <property type="entry name" value="IspE"/>
    <property type="match status" value="1"/>
</dbReference>
<dbReference type="SUPFAM" id="SSF55060">
    <property type="entry name" value="GHMP Kinase, C-terminal domain"/>
    <property type="match status" value="1"/>
</dbReference>
<dbReference type="SUPFAM" id="SSF54211">
    <property type="entry name" value="Ribosomal protein S5 domain 2-like"/>
    <property type="match status" value="1"/>
</dbReference>
<feature type="chain" id="PRO_0000189203" description="4-diphosphocytidyl-2-C-methyl-D-erythritol kinase">
    <location>
        <begin position="1"/>
        <end position="283"/>
    </location>
</feature>
<feature type="active site" evidence="1">
    <location>
        <position position="8"/>
    </location>
</feature>
<feature type="active site" evidence="1">
    <location>
        <position position="132"/>
    </location>
</feature>
<feature type="binding site" evidence="1">
    <location>
        <begin position="90"/>
        <end position="100"/>
    </location>
    <ligand>
        <name>ATP</name>
        <dbReference type="ChEBI" id="CHEBI:30616"/>
    </ligand>
</feature>
<protein>
    <recommendedName>
        <fullName evidence="1">4-diphosphocytidyl-2-C-methyl-D-erythritol kinase</fullName>
        <shortName evidence="1">CMK</shortName>
        <ecNumber evidence="1">2.7.1.148</ecNumber>
    </recommendedName>
    <alternativeName>
        <fullName evidence="1">4-(cytidine-5'-diphospho)-2-C-methyl-D-erythritol kinase</fullName>
    </alternativeName>
</protein>
<name>ISPE_CHLMU</name>
<keyword id="KW-0067">ATP-binding</keyword>
<keyword id="KW-0414">Isoprene biosynthesis</keyword>
<keyword id="KW-0418">Kinase</keyword>
<keyword id="KW-0547">Nucleotide-binding</keyword>
<keyword id="KW-0808">Transferase</keyword>
<organism>
    <name type="scientific">Chlamydia muridarum (strain MoPn / Nigg)</name>
    <dbReference type="NCBI Taxonomy" id="243161"/>
    <lineage>
        <taxon>Bacteria</taxon>
        <taxon>Pseudomonadati</taxon>
        <taxon>Chlamydiota</taxon>
        <taxon>Chlamydiia</taxon>
        <taxon>Chlamydiales</taxon>
        <taxon>Chlamydiaceae</taxon>
        <taxon>Chlamydia/Chlamydophila group</taxon>
        <taxon>Chlamydia</taxon>
    </lineage>
</organism>
<proteinExistence type="inferred from homology"/>